<reference key="1">
    <citation type="submission" date="2006-12" db="EMBL/GenBank/DDBJ databases">
        <title>Complete sequence of Shewanella sp. W3-18-1.</title>
        <authorList>
            <consortium name="US DOE Joint Genome Institute"/>
            <person name="Copeland A."/>
            <person name="Lucas S."/>
            <person name="Lapidus A."/>
            <person name="Barry K."/>
            <person name="Detter J.C."/>
            <person name="Glavina del Rio T."/>
            <person name="Hammon N."/>
            <person name="Israni S."/>
            <person name="Dalin E."/>
            <person name="Tice H."/>
            <person name="Pitluck S."/>
            <person name="Chain P."/>
            <person name="Malfatti S."/>
            <person name="Shin M."/>
            <person name="Vergez L."/>
            <person name="Schmutz J."/>
            <person name="Larimer F."/>
            <person name="Land M."/>
            <person name="Hauser L."/>
            <person name="Kyrpides N."/>
            <person name="Lykidis A."/>
            <person name="Tiedje J."/>
            <person name="Richardson P."/>
        </authorList>
    </citation>
    <scope>NUCLEOTIDE SEQUENCE [LARGE SCALE GENOMIC DNA]</scope>
    <source>
        <strain>W3-18-1</strain>
    </source>
</reference>
<comment type="function">
    <text evidence="1">Catalyzes the isomerization between 2-isopropylmalate and 3-isopropylmalate, via the formation of 2-isopropylmaleate.</text>
</comment>
<comment type="catalytic activity">
    <reaction evidence="1">
        <text>(2R,3S)-3-isopropylmalate = (2S)-2-isopropylmalate</text>
        <dbReference type="Rhea" id="RHEA:32287"/>
        <dbReference type="ChEBI" id="CHEBI:1178"/>
        <dbReference type="ChEBI" id="CHEBI:35121"/>
        <dbReference type="EC" id="4.2.1.33"/>
    </reaction>
</comment>
<comment type="pathway">
    <text evidence="1">Amino-acid biosynthesis; L-leucine biosynthesis; L-leucine from 3-methyl-2-oxobutanoate: step 2/4.</text>
</comment>
<comment type="subunit">
    <text evidence="1">Heterodimer of LeuC and LeuD.</text>
</comment>
<comment type="similarity">
    <text evidence="1">Belongs to the LeuD family. LeuD type 1 subfamily.</text>
</comment>
<name>LEUD_SHESW</name>
<gene>
    <name evidence="1" type="primary">leuD</name>
    <name type="ordered locus">Sputw3181_0377</name>
</gene>
<sequence>MQPFTTHTGLAVMIDSTNIDTDQIIPKQFLSKVTRDGFGVHLFHDWRYLDDAGDVPNPEFSLNQPRYKGASILVSQENFGCGSSREHAPWALADFGLRAIIAPSFADIFYGNSINNGLLPVALTHAQVRQLMDEVAAEEGAQITVDLTSCKVISPSGAEFSFTLAESARHKLLNGLDAIGLTLSHAAQISQYETQIQGWRS</sequence>
<accession>A1REY3</accession>
<keyword id="KW-0028">Amino-acid biosynthesis</keyword>
<keyword id="KW-0100">Branched-chain amino acid biosynthesis</keyword>
<keyword id="KW-0432">Leucine biosynthesis</keyword>
<keyword id="KW-0456">Lyase</keyword>
<proteinExistence type="inferred from homology"/>
<feature type="chain" id="PRO_1000063840" description="3-isopropylmalate dehydratase small subunit">
    <location>
        <begin position="1"/>
        <end position="201"/>
    </location>
</feature>
<protein>
    <recommendedName>
        <fullName evidence="1">3-isopropylmalate dehydratase small subunit</fullName>
        <ecNumber evidence="1">4.2.1.33</ecNumber>
    </recommendedName>
    <alternativeName>
        <fullName evidence="1">Alpha-IPM isomerase</fullName>
        <shortName evidence="1">IPMI</shortName>
    </alternativeName>
    <alternativeName>
        <fullName evidence="1">Isopropylmalate isomerase</fullName>
    </alternativeName>
</protein>
<evidence type="ECO:0000255" key="1">
    <source>
        <dbReference type="HAMAP-Rule" id="MF_01031"/>
    </source>
</evidence>
<organism>
    <name type="scientific">Shewanella sp. (strain W3-18-1)</name>
    <dbReference type="NCBI Taxonomy" id="351745"/>
    <lineage>
        <taxon>Bacteria</taxon>
        <taxon>Pseudomonadati</taxon>
        <taxon>Pseudomonadota</taxon>
        <taxon>Gammaproteobacteria</taxon>
        <taxon>Alteromonadales</taxon>
        <taxon>Shewanellaceae</taxon>
        <taxon>Shewanella</taxon>
    </lineage>
</organism>
<dbReference type="EC" id="4.2.1.33" evidence="1"/>
<dbReference type="EMBL" id="CP000503">
    <property type="protein sequence ID" value="ABM23228.1"/>
    <property type="molecule type" value="Genomic_DNA"/>
</dbReference>
<dbReference type="RefSeq" id="WP_011787771.1">
    <property type="nucleotide sequence ID" value="NC_008750.1"/>
</dbReference>
<dbReference type="SMR" id="A1REY3"/>
<dbReference type="KEGG" id="shw:Sputw3181_0377"/>
<dbReference type="HOGENOM" id="CLU_081378_0_3_6"/>
<dbReference type="UniPathway" id="UPA00048">
    <property type="reaction ID" value="UER00071"/>
</dbReference>
<dbReference type="Proteomes" id="UP000002597">
    <property type="component" value="Chromosome"/>
</dbReference>
<dbReference type="GO" id="GO:0009316">
    <property type="term" value="C:3-isopropylmalate dehydratase complex"/>
    <property type="evidence" value="ECO:0007669"/>
    <property type="project" value="InterPro"/>
</dbReference>
<dbReference type="GO" id="GO:0003861">
    <property type="term" value="F:3-isopropylmalate dehydratase activity"/>
    <property type="evidence" value="ECO:0007669"/>
    <property type="project" value="UniProtKB-UniRule"/>
</dbReference>
<dbReference type="GO" id="GO:0009098">
    <property type="term" value="P:L-leucine biosynthetic process"/>
    <property type="evidence" value="ECO:0007669"/>
    <property type="project" value="UniProtKB-UniRule"/>
</dbReference>
<dbReference type="CDD" id="cd01577">
    <property type="entry name" value="IPMI_Swivel"/>
    <property type="match status" value="1"/>
</dbReference>
<dbReference type="FunFam" id="3.20.19.10:FF:000003">
    <property type="entry name" value="3-isopropylmalate dehydratase small subunit"/>
    <property type="match status" value="1"/>
</dbReference>
<dbReference type="Gene3D" id="3.20.19.10">
    <property type="entry name" value="Aconitase, domain 4"/>
    <property type="match status" value="1"/>
</dbReference>
<dbReference type="HAMAP" id="MF_01031">
    <property type="entry name" value="LeuD_type1"/>
    <property type="match status" value="1"/>
</dbReference>
<dbReference type="InterPro" id="IPR004431">
    <property type="entry name" value="3-IsopropMal_deHydase_ssu"/>
</dbReference>
<dbReference type="InterPro" id="IPR015928">
    <property type="entry name" value="Aconitase/3IPM_dehydase_swvl"/>
</dbReference>
<dbReference type="InterPro" id="IPR000573">
    <property type="entry name" value="AconitaseA/IPMdHydase_ssu_swvl"/>
</dbReference>
<dbReference type="InterPro" id="IPR033940">
    <property type="entry name" value="IPMI_Swivel"/>
</dbReference>
<dbReference type="InterPro" id="IPR050075">
    <property type="entry name" value="LeuD"/>
</dbReference>
<dbReference type="NCBIfam" id="TIGR00171">
    <property type="entry name" value="leuD"/>
    <property type="match status" value="1"/>
</dbReference>
<dbReference type="NCBIfam" id="NF002458">
    <property type="entry name" value="PRK01641.1"/>
    <property type="match status" value="1"/>
</dbReference>
<dbReference type="PANTHER" id="PTHR43345:SF5">
    <property type="entry name" value="3-ISOPROPYLMALATE DEHYDRATASE SMALL SUBUNIT"/>
    <property type="match status" value="1"/>
</dbReference>
<dbReference type="PANTHER" id="PTHR43345">
    <property type="entry name" value="3-ISOPROPYLMALATE DEHYDRATASE SMALL SUBUNIT 2-RELATED-RELATED"/>
    <property type="match status" value="1"/>
</dbReference>
<dbReference type="Pfam" id="PF00694">
    <property type="entry name" value="Aconitase_C"/>
    <property type="match status" value="1"/>
</dbReference>
<dbReference type="SUPFAM" id="SSF52016">
    <property type="entry name" value="LeuD/IlvD-like"/>
    <property type="match status" value="1"/>
</dbReference>